<accession>A0AJP7</accession>
<proteinExistence type="inferred from homology"/>
<reference key="1">
    <citation type="journal article" date="2006" name="J. Bacteriol.">
        <title>Whole-genome sequence of Listeria welshimeri reveals common steps in genome reduction with Listeria innocua as compared to Listeria monocytogenes.</title>
        <authorList>
            <person name="Hain T."/>
            <person name="Steinweg C."/>
            <person name="Kuenne C.T."/>
            <person name="Billion A."/>
            <person name="Ghai R."/>
            <person name="Chatterjee S.S."/>
            <person name="Domann E."/>
            <person name="Kaerst U."/>
            <person name="Goesmann A."/>
            <person name="Bekel T."/>
            <person name="Bartels D."/>
            <person name="Kaiser O."/>
            <person name="Meyer F."/>
            <person name="Puehler A."/>
            <person name="Weisshaar B."/>
            <person name="Wehland J."/>
            <person name="Liang C."/>
            <person name="Dandekar T."/>
            <person name="Lampidis R."/>
            <person name="Kreft J."/>
            <person name="Goebel W."/>
            <person name="Chakraborty T."/>
        </authorList>
    </citation>
    <scope>NUCLEOTIDE SEQUENCE [LARGE SCALE GENOMIC DNA]</scope>
    <source>
        <strain>ATCC 35897 / DSM 20650 / CCUG 15529 / CIP 8149 / NCTC 11857 / SLCC 5334 / V8</strain>
    </source>
</reference>
<dbReference type="EC" id="2.1.1.228" evidence="1"/>
<dbReference type="EMBL" id="AM263198">
    <property type="protein sequence ID" value="CAK21229.1"/>
    <property type="molecule type" value="Genomic_DNA"/>
</dbReference>
<dbReference type="RefSeq" id="WP_011702585.1">
    <property type="nucleotide sequence ID" value="NC_008555.1"/>
</dbReference>
<dbReference type="SMR" id="A0AJP7"/>
<dbReference type="STRING" id="386043.lwe1811"/>
<dbReference type="GeneID" id="61189712"/>
<dbReference type="KEGG" id="lwe:lwe1811"/>
<dbReference type="eggNOG" id="COG0336">
    <property type="taxonomic scope" value="Bacteria"/>
</dbReference>
<dbReference type="HOGENOM" id="CLU_047363_0_1_9"/>
<dbReference type="OrthoDB" id="9807416at2"/>
<dbReference type="Proteomes" id="UP000000779">
    <property type="component" value="Chromosome"/>
</dbReference>
<dbReference type="GO" id="GO:0005829">
    <property type="term" value="C:cytosol"/>
    <property type="evidence" value="ECO:0007669"/>
    <property type="project" value="TreeGrafter"/>
</dbReference>
<dbReference type="GO" id="GO:0052906">
    <property type="term" value="F:tRNA (guanine(37)-N1)-methyltransferase activity"/>
    <property type="evidence" value="ECO:0007669"/>
    <property type="project" value="UniProtKB-UniRule"/>
</dbReference>
<dbReference type="GO" id="GO:0002939">
    <property type="term" value="P:tRNA N1-guanine methylation"/>
    <property type="evidence" value="ECO:0007669"/>
    <property type="project" value="TreeGrafter"/>
</dbReference>
<dbReference type="CDD" id="cd18080">
    <property type="entry name" value="TrmD-like"/>
    <property type="match status" value="1"/>
</dbReference>
<dbReference type="FunFam" id="1.10.1270.20:FF:000001">
    <property type="entry name" value="tRNA (guanine-N(1)-)-methyltransferase"/>
    <property type="match status" value="1"/>
</dbReference>
<dbReference type="FunFam" id="3.40.1280.10:FF:000001">
    <property type="entry name" value="tRNA (guanine-N(1)-)-methyltransferase"/>
    <property type="match status" value="1"/>
</dbReference>
<dbReference type="Gene3D" id="3.40.1280.10">
    <property type="match status" value="1"/>
</dbReference>
<dbReference type="Gene3D" id="1.10.1270.20">
    <property type="entry name" value="tRNA(m1g37)methyltransferase, domain 2"/>
    <property type="match status" value="1"/>
</dbReference>
<dbReference type="HAMAP" id="MF_00605">
    <property type="entry name" value="TrmD"/>
    <property type="match status" value="1"/>
</dbReference>
<dbReference type="InterPro" id="IPR029028">
    <property type="entry name" value="Alpha/beta_knot_MTases"/>
</dbReference>
<dbReference type="InterPro" id="IPR023148">
    <property type="entry name" value="tRNA_m1G_MeTrfase_C_sf"/>
</dbReference>
<dbReference type="InterPro" id="IPR002649">
    <property type="entry name" value="tRNA_m1G_MeTrfase_TrmD"/>
</dbReference>
<dbReference type="InterPro" id="IPR029026">
    <property type="entry name" value="tRNA_m1G_MTases_N"/>
</dbReference>
<dbReference type="InterPro" id="IPR016009">
    <property type="entry name" value="tRNA_MeTrfase_TRMD/TRM10"/>
</dbReference>
<dbReference type="NCBIfam" id="NF000648">
    <property type="entry name" value="PRK00026.1"/>
    <property type="match status" value="1"/>
</dbReference>
<dbReference type="NCBIfam" id="TIGR00088">
    <property type="entry name" value="trmD"/>
    <property type="match status" value="1"/>
</dbReference>
<dbReference type="PANTHER" id="PTHR46417">
    <property type="entry name" value="TRNA (GUANINE-N(1)-)-METHYLTRANSFERASE"/>
    <property type="match status" value="1"/>
</dbReference>
<dbReference type="PANTHER" id="PTHR46417:SF1">
    <property type="entry name" value="TRNA (GUANINE-N(1)-)-METHYLTRANSFERASE"/>
    <property type="match status" value="1"/>
</dbReference>
<dbReference type="Pfam" id="PF01746">
    <property type="entry name" value="tRNA_m1G_MT"/>
    <property type="match status" value="1"/>
</dbReference>
<dbReference type="PIRSF" id="PIRSF000386">
    <property type="entry name" value="tRNA_mtase"/>
    <property type="match status" value="1"/>
</dbReference>
<dbReference type="SUPFAM" id="SSF75217">
    <property type="entry name" value="alpha/beta knot"/>
    <property type="match status" value="1"/>
</dbReference>
<organism>
    <name type="scientific">Listeria welshimeri serovar 6b (strain ATCC 35897 / DSM 20650 / CCUG 15529 / CIP 8149 / NCTC 11857 / SLCC 5334 / V8)</name>
    <dbReference type="NCBI Taxonomy" id="386043"/>
    <lineage>
        <taxon>Bacteria</taxon>
        <taxon>Bacillati</taxon>
        <taxon>Bacillota</taxon>
        <taxon>Bacilli</taxon>
        <taxon>Bacillales</taxon>
        <taxon>Listeriaceae</taxon>
        <taxon>Listeria</taxon>
    </lineage>
</organism>
<sequence length="245" mass="27987">MKIDILSIFPDMFSGVTGNSIIKKAIENERVEVEVTDFREYAEGKHHIVDDYPYGGGAGMLLKAQPIFDAVQAVKEKQPETKPRVILMDPAGKRFDQKMAEEFAEEEHLVFICGHYEGYDERIREHLVTDEVSIGDYILTGGEIGAMIVMDSVIRLLPGVLGNKDSAVTDSFSTGLLEHPHYTRPADFRGMKVPDILLSGNHAWIEEWRDKESLKRTYERRPDLLKNYPLTDKQKTWLKEWSDSK</sequence>
<protein>
    <recommendedName>
        <fullName evidence="1">tRNA (guanine-N(1)-)-methyltransferase</fullName>
        <ecNumber evidence="1">2.1.1.228</ecNumber>
    </recommendedName>
    <alternativeName>
        <fullName evidence="1">M1G-methyltransferase</fullName>
    </alternativeName>
    <alternativeName>
        <fullName evidence="1">tRNA [GM37] methyltransferase</fullName>
    </alternativeName>
</protein>
<keyword id="KW-0963">Cytoplasm</keyword>
<keyword id="KW-0489">Methyltransferase</keyword>
<keyword id="KW-0949">S-adenosyl-L-methionine</keyword>
<keyword id="KW-0808">Transferase</keyword>
<keyword id="KW-0819">tRNA processing</keyword>
<comment type="function">
    <text evidence="1">Specifically methylates guanosine-37 in various tRNAs.</text>
</comment>
<comment type="catalytic activity">
    <reaction evidence="1">
        <text>guanosine(37) in tRNA + S-adenosyl-L-methionine = N(1)-methylguanosine(37) in tRNA + S-adenosyl-L-homocysteine + H(+)</text>
        <dbReference type="Rhea" id="RHEA:36899"/>
        <dbReference type="Rhea" id="RHEA-COMP:10145"/>
        <dbReference type="Rhea" id="RHEA-COMP:10147"/>
        <dbReference type="ChEBI" id="CHEBI:15378"/>
        <dbReference type="ChEBI" id="CHEBI:57856"/>
        <dbReference type="ChEBI" id="CHEBI:59789"/>
        <dbReference type="ChEBI" id="CHEBI:73542"/>
        <dbReference type="ChEBI" id="CHEBI:74269"/>
        <dbReference type="EC" id="2.1.1.228"/>
    </reaction>
</comment>
<comment type="subunit">
    <text evidence="1">Homodimer.</text>
</comment>
<comment type="subcellular location">
    <subcellularLocation>
        <location evidence="1">Cytoplasm</location>
    </subcellularLocation>
</comment>
<comment type="similarity">
    <text evidence="1">Belongs to the RNA methyltransferase TrmD family.</text>
</comment>
<name>TRMD_LISW6</name>
<gene>
    <name evidence="1" type="primary">trmD</name>
    <name type="ordered locus">lwe1811</name>
</gene>
<feature type="chain" id="PRO_1000006494" description="tRNA (guanine-N(1)-)-methyltransferase">
    <location>
        <begin position="1"/>
        <end position="245"/>
    </location>
</feature>
<feature type="binding site" evidence="1">
    <location>
        <position position="114"/>
    </location>
    <ligand>
        <name>S-adenosyl-L-methionine</name>
        <dbReference type="ChEBI" id="CHEBI:59789"/>
    </ligand>
</feature>
<feature type="binding site" evidence="1">
    <location>
        <begin position="134"/>
        <end position="139"/>
    </location>
    <ligand>
        <name>S-adenosyl-L-methionine</name>
        <dbReference type="ChEBI" id="CHEBI:59789"/>
    </ligand>
</feature>
<evidence type="ECO:0000255" key="1">
    <source>
        <dbReference type="HAMAP-Rule" id="MF_00605"/>
    </source>
</evidence>